<accession>A6W374</accession>
<dbReference type="EMBL" id="CP000749">
    <property type="protein sequence ID" value="ABR73153.1"/>
    <property type="molecule type" value="Genomic_DNA"/>
</dbReference>
<dbReference type="SMR" id="A6W374"/>
<dbReference type="STRING" id="400668.Mmwyl1_4258"/>
<dbReference type="KEGG" id="mmw:Mmwyl1_4258"/>
<dbReference type="eggNOG" id="COG1841">
    <property type="taxonomic scope" value="Bacteria"/>
</dbReference>
<dbReference type="HOGENOM" id="CLU_131047_1_4_6"/>
<dbReference type="OrthoDB" id="9812790at2"/>
<dbReference type="GO" id="GO:0022625">
    <property type="term" value="C:cytosolic large ribosomal subunit"/>
    <property type="evidence" value="ECO:0007669"/>
    <property type="project" value="TreeGrafter"/>
</dbReference>
<dbReference type="GO" id="GO:0003735">
    <property type="term" value="F:structural constituent of ribosome"/>
    <property type="evidence" value="ECO:0007669"/>
    <property type="project" value="InterPro"/>
</dbReference>
<dbReference type="GO" id="GO:0006412">
    <property type="term" value="P:translation"/>
    <property type="evidence" value="ECO:0007669"/>
    <property type="project" value="UniProtKB-UniRule"/>
</dbReference>
<dbReference type="CDD" id="cd01658">
    <property type="entry name" value="Ribosomal_L30"/>
    <property type="match status" value="1"/>
</dbReference>
<dbReference type="FunFam" id="3.30.1390.20:FF:000001">
    <property type="entry name" value="50S ribosomal protein L30"/>
    <property type="match status" value="1"/>
</dbReference>
<dbReference type="Gene3D" id="3.30.1390.20">
    <property type="entry name" value="Ribosomal protein L30, ferredoxin-like fold domain"/>
    <property type="match status" value="1"/>
</dbReference>
<dbReference type="HAMAP" id="MF_01371_B">
    <property type="entry name" value="Ribosomal_uL30_B"/>
    <property type="match status" value="1"/>
</dbReference>
<dbReference type="InterPro" id="IPR036919">
    <property type="entry name" value="Ribo_uL30_ferredoxin-like_sf"/>
</dbReference>
<dbReference type="InterPro" id="IPR005996">
    <property type="entry name" value="Ribosomal_uL30_bac-type"/>
</dbReference>
<dbReference type="InterPro" id="IPR018038">
    <property type="entry name" value="Ribosomal_uL30_CS"/>
</dbReference>
<dbReference type="InterPro" id="IPR016082">
    <property type="entry name" value="Ribosomal_uL30_ferredoxin-like"/>
</dbReference>
<dbReference type="NCBIfam" id="TIGR01308">
    <property type="entry name" value="rpmD_bact"/>
    <property type="match status" value="1"/>
</dbReference>
<dbReference type="PANTHER" id="PTHR15892:SF2">
    <property type="entry name" value="LARGE RIBOSOMAL SUBUNIT PROTEIN UL30M"/>
    <property type="match status" value="1"/>
</dbReference>
<dbReference type="PANTHER" id="PTHR15892">
    <property type="entry name" value="MITOCHONDRIAL RIBOSOMAL PROTEIN L30"/>
    <property type="match status" value="1"/>
</dbReference>
<dbReference type="Pfam" id="PF00327">
    <property type="entry name" value="Ribosomal_L30"/>
    <property type="match status" value="1"/>
</dbReference>
<dbReference type="PIRSF" id="PIRSF002211">
    <property type="entry name" value="Ribosomal_L30_bac-type"/>
    <property type="match status" value="1"/>
</dbReference>
<dbReference type="SUPFAM" id="SSF55129">
    <property type="entry name" value="Ribosomal protein L30p/L7e"/>
    <property type="match status" value="1"/>
</dbReference>
<dbReference type="PROSITE" id="PS00634">
    <property type="entry name" value="RIBOSOMAL_L30"/>
    <property type="match status" value="1"/>
</dbReference>
<comment type="subunit">
    <text evidence="1">Part of the 50S ribosomal subunit.</text>
</comment>
<comment type="similarity">
    <text evidence="1">Belongs to the universal ribosomal protein uL30 family.</text>
</comment>
<organism>
    <name type="scientific">Marinomonas sp. (strain MWYL1)</name>
    <dbReference type="NCBI Taxonomy" id="400668"/>
    <lineage>
        <taxon>Bacteria</taxon>
        <taxon>Pseudomonadati</taxon>
        <taxon>Pseudomonadota</taxon>
        <taxon>Gammaproteobacteria</taxon>
        <taxon>Oceanospirillales</taxon>
        <taxon>Oceanospirillaceae</taxon>
        <taxon>Marinomonas</taxon>
    </lineage>
</organism>
<proteinExistence type="inferred from homology"/>
<feature type="chain" id="PRO_0000347114" description="Large ribosomal subunit protein uL30">
    <location>
        <begin position="1"/>
        <end position="61"/>
    </location>
</feature>
<name>RL30_MARMS</name>
<gene>
    <name evidence="1" type="primary">rpmD</name>
    <name type="ordered locus">Mmwyl1_4258</name>
</gene>
<reference key="1">
    <citation type="submission" date="2007-06" db="EMBL/GenBank/DDBJ databases">
        <title>Complete sequence of Marinomonas sp. MWYL1.</title>
        <authorList>
            <consortium name="US DOE Joint Genome Institute"/>
            <person name="Copeland A."/>
            <person name="Lucas S."/>
            <person name="Lapidus A."/>
            <person name="Barry K."/>
            <person name="Glavina del Rio T."/>
            <person name="Dalin E."/>
            <person name="Tice H."/>
            <person name="Pitluck S."/>
            <person name="Kiss H."/>
            <person name="Brettin T."/>
            <person name="Bruce D."/>
            <person name="Detter J.C."/>
            <person name="Han C."/>
            <person name="Schmutz J."/>
            <person name="Larimer F."/>
            <person name="Land M."/>
            <person name="Hauser L."/>
            <person name="Kyrpides N."/>
            <person name="Kim E."/>
            <person name="Johnston A.W.B."/>
            <person name="Todd J.D."/>
            <person name="Rogers R."/>
            <person name="Wexler M."/>
            <person name="Bond P.L."/>
            <person name="Li Y."/>
            <person name="Richardson P."/>
        </authorList>
    </citation>
    <scope>NUCLEOTIDE SEQUENCE [LARGE SCALE GENOMIC DNA]</scope>
    <source>
        <strain>MWYL1</strain>
    </source>
</reference>
<sequence>MANNTITVQLTRSPIGRLPKHRETVKGLGLRKVGQTRELEDTPSVRGMVNKVYYMVKVVGE</sequence>
<protein>
    <recommendedName>
        <fullName evidence="1">Large ribosomal subunit protein uL30</fullName>
    </recommendedName>
    <alternativeName>
        <fullName evidence="2">50S ribosomal protein L30</fullName>
    </alternativeName>
</protein>
<evidence type="ECO:0000255" key="1">
    <source>
        <dbReference type="HAMAP-Rule" id="MF_01371"/>
    </source>
</evidence>
<evidence type="ECO:0000305" key="2"/>
<keyword id="KW-0687">Ribonucleoprotein</keyword>
<keyword id="KW-0689">Ribosomal protein</keyword>